<organism>
    <name type="scientific">Dictyostelium discoideum</name>
    <name type="common">Social amoeba</name>
    <dbReference type="NCBI Taxonomy" id="44689"/>
    <lineage>
        <taxon>Eukaryota</taxon>
        <taxon>Amoebozoa</taxon>
        <taxon>Evosea</taxon>
        <taxon>Eumycetozoa</taxon>
        <taxon>Dictyostelia</taxon>
        <taxon>Dictyosteliales</taxon>
        <taxon>Dictyosteliaceae</taxon>
        <taxon>Dictyostelium</taxon>
    </lineage>
</organism>
<accession>Q54NZ7</accession>
<gene>
    <name type="primary">alrB</name>
    <name type="ORF">DDB_G0285053</name>
</gene>
<reference key="1">
    <citation type="journal article" date="2005" name="Nature">
        <title>The genome of the social amoeba Dictyostelium discoideum.</title>
        <authorList>
            <person name="Eichinger L."/>
            <person name="Pachebat J.A."/>
            <person name="Gloeckner G."/>
            <person name="Rajandream M.A."/>
            <person name="Sucgang R."/>
            <person name="Berriman M."/>
            <person name="Song J."/>
            <person name="Olsen R."/>
            <person name="Szafranski K."/>
            <person name="Xu Q."/>
            <person name="Tunggal B."/>
            <person name="Kummerfeld S."/>
            <person name="Madera M."/>
            <person name="Konfortov B.A."/>
            <person name="Rivero F."/>
            <person name="Bankier A.T."/>
            <person name="Lehmann R."/>
            <person name="Hamlin N."/>
            <person name="Davies R."/>
            <person name="Gaudet P."/>
            <person name="Fey P."/>
            <person name="Pilcher K."/>
            <person name="Chen G."/>
            <person name="Saunders D."/>
            <person name="Sodergren E.J."/>
            <person name="Davis P."/>
            <person name="Kerhornou A."/>
            <person name="Nie X."/>
            <person name="Hall N."/>
            <person name="Anjard C."/>
            <person name="Hemphill L."/>
            <person name="Bason N."/>
            <person name="Farbrother P."/>
            <person name="Desany B."/>
            <person name="Just E."/>
            <person name="Morio T."/>
            <person name="Rost R."/>
            <person name="Churcher C.M."/>
            <person name="Cooper J."/>
            <person name="Haydock S."/>
            <person name="van Driessche N."/>
            <person name="Cronin A."/>
            <person name="Goodhead I."/>
            <person name="Muzny D.M."/>
            <person name="Mourier T."/>
            <person name="Pain A."/>
            <person name="Lu M."/>
            <person name="Harper D."/>
            <person name="Lindsay R."/>
            <person name="Hauser H."/>
            <person name="James K.D."/>
            <person name="Quiles M."/>
            <person name="Madan Babu M."/>
            <person name="Saito T."/>
            <person name="Buchrieser C."/>
            <person name="Wardroper A."/>
            <person name="Felder M."/>
            <person name="Thangavelu M."/>
            <person name="Johnson D."/>
            <person name="Knights A."/>
            <person name="Loulseged H."/>
            <person name="Mungall K.L."/>
            <person name="Oliver K."/>
            <person name="Price C."/>
            <person name="Quail M.A."/>
            <person name="Urushihara H."/>
            <person name="Hernandez J."/>
            <person name="Rabbinowitsch E."/>
            <person name="Steffen D."/>
            <person name="Sanders M."/>
            <person name="Ma J."/>
            <person name="Kohara Y."/>
            <person name="Sharp S."/>
            <person name="Simmonds M.N."/>
            <person name="Spiegler S."/>
            <person name="Tivey A."/>
            <person name="Sugano S."/>
            <person name="White B."/>
            <person name="Walker D."/>
            <person name="Woodward J.R."/>
            <person name="Winckler T."/>
            <person name="Tanaka Y."/>
            <person name="Shaulsky G."/>
            <person name="Schleicher M."/>
            <person name="Weinstock G.M."/>
            <person name="Rosenthal A."/>
            <person name="Cox E.C."/>
            <person name="Chisholm R.L."/>
            <person name="Gibbs R.A."/>
            <person name="Loomis W.F."/>
            <person name="Platzer M."/>
            <person name="Kay R.R."/>
            <person name="Williams J.G."/>
            <person name="Dear P.H."/>
            <person name="Noegel A.A."/>
            <person name="Barrell B.G."/>
            <person name="Kuspa A."/>
        </authorList>
    </citation>
    <scope>NUCLEOTIDE SEQUENCE [LARGE SCALE GENOMIC DNA]</scope>
    <source>
        <strain>AX4</strain>
    </source>
</reference>
<protein>
    <recommendedName>
        <fullName>Aldose reductase B</fullName>
        <shortName>ARB</shortName>
        <ecNumber>1.1.1.21</ecNumber>
    </recommendedName>
    <alternativeName>
        <fullName>Aldehyde reductase B</fullName>
    </alternativeName>
</protein>
<name>ALRB_DICDI</name>
<keyword id="KW-0521">NADP</keyword>
<keyword id="KW-0560">Oxidoreductase</keyword>
<keyword id="KW-1185">Reference proteome</keyword>
<feature type="chain" id="PRO_0000327646" description="Aldose reductase B">
    <location>
        <begin position="1"/>
        <end position="311"/>
    </location>
</feature>
<feature type="active site" description="Proton donor" evidence="1">
    <location>
        <position position="54"/>
    </location>
</feature>
<feature type="binding site" evidence="2">
    <location>
        <begin position="13"/>
        <end position="23"/>
    </location>
    <ligand>
        <name>NADP(+)</name>
        <dbReference type="ChEBI" id="CHEBI:58349"/>
    </ligand>
</feature>
<feature type="binding site" evidence="1">
    <location>
        <position position="116"/>
    </location>
    <ligand>
        <name>substrate</name>
    </ligand>
</feature>
<feature type="binding site" evidence="1">
    <location>
        <begin position="219"/>
        <end position="273"/>
    </location>
    <ligand>
        <name>NADP(+)</name>
        <dbReference type="ChEBI" id="CHEBI:58349"/>
    </ligand>
</feature>
<comment type="function">
    <text evidence="1">Catalyzes the NADPH-dependent reduction of a wide variety of carbonyl-containing compounds to their corresponding alcohols with a broad range of catalytic efficiencies.</text>
</comment>
<comment type="catalytic activity">
    <reaction>
        <text>an alditol + NAD(+) = an aldose + NADH + H(+)</text>
        <dbReference type="Rhea" id="RHEA:12785"/>
        <dbReference type="Rhea" id="RHEA-COMP:9554"/>
        <dbReference type="Rhea" id="RHEA-COMP:9555"/>
        <dbReference type="ChEBI" id="CHEBI:15378"/>
        <dbReference type="ChEBI" id="CHEBI:15693"/>
        <dbReference type="ChEBI" id="CHEBI:17522"/>
        <dbReference type="ChEBI" id="CHEBI:57540"/>
        <dbReference type="ChEBI" id="CHEBI:57945"/>
        <dbReference type="EC" id="1.1.1.21"/>
    </reaction>
</comment>
<comment type="catalytic activity">
    <reaction>
        <text>an alditol + NADP(+) = an aldose + NADPH + H(+)</text>
        <dbReference type="Rhea" id="RHEA:12789"/>
        <dbReference type="Rhea" id="RHEA-COMP:9554"/>
        <dbReference type="Rhea" id="RHEA-COMP:9555"/>
        <dbReference type="ChEBI" id="CHEBI:15378"/>
        <dbReference type="ChEBI" id="CHEBI:15693"/>
        <dbReference type="ChEBI" id="CHEBI:17522"/>
        <dbReference type="ChEBI" id="CHEBI:57783"/>
        <dbReference type="ChEBI" id="CHEBI:58349"/>
        <dbReference type="EC" id="1.1.1.21"/>
    </reaction>
</comment>
<comment type="similarity">
    <text evidence="3">Belongs to the aldo/keto reductase family.</text>
</comment>
<dbReference type="EC" id="1.1.1.21"/>
<dbReference type="EMBL" id="AAFI02000073">
    <property type="protein sequence ID" value="EAL64990.2"/>
    <property type="molecule type" value="Genomic_DNA"/>
</dbReference>
<dbReference type="RefSeq" id="XP_639920.2">
    <property type="nucleotide sequence ID" value="XM_634828.2"/>
</dbReference>
<dbReference type="SMR" id="Q54NZ7"/>
<dbReference type="FunCoup" id="Q54NZ7">
    <property type="interactions" value="137"/>
</dbReference>
<dbReference type="STRING" id="44689.Q54NZ7"/>
<dbReference type="PaxDb" id="44689-DDB0231282"/>
<dbReference type="EnsemblProtists" id="EAL64990">
    <property type="protein sequence ID" value="EAL64990"/>
    <property type="gene ID" value="DDB_G0285053"/>
</dbReference>
<dbReference type="GeneID" id="8624832"/>
<dbReference type="KEGG" id="ddi:DDB_G0285053"/>
<dbReference type="dictyBase" id="DDB_G0285053">
    <property type="gene designation" value="alrB"/>
</dbReference>
<dbReference type="VEuPathDB" id="AmoebaDB:DDB_G0285053"/>
<dbReference type="eggNOG" id="KOG1577">
    <property type="taxonomic scope" value="Eukaryota"/>
</dbReference>
<dbReference type="HOGENOM" id="CLU_023205_0_3_1"/>
<dbReference type="InParanoid" id="Q54NZ7"/>
<dbReference type="OMA" id="LWNSQHH"/>
<dbReference type="PhylomeDB" id="Q54NZ7"/>
<dbReference type="Reactome" id="R-DDI-156590">
    <property type="pathway name" value="Glutathione conjugation"/>
</dbReference>
<dbReference type="Reactome" id="R-DDI-193144">
    <property type="pathway name" value="Estrogen biosynthesis"/>
</dbReference>
<dbReference type="Reactome" id="R-DDI-193368">
    <property type="pathway name" value="Synthesis of bile acids and bile salts via 7alpha-hydroxycholesterol"/>
</dbReference>
<dbReference type="Reactome" id="R-DDI-193775">
    <property type="pathway name" value="Synthesis of bile acids and bile salts via 24-hydroxycholesterol"/>
</dbReference>
<dbReference type="Reactome" id="R-DDI-193807">
    <property type="pathway name" value="Synthesis of bile acids and bile salts via 27-hydroxycholesterol"/>
</dbReference>
<dbReference type="Reactome" id="R-DDI-196108">
    <property type="pathway name" value="Pregnenolone biosynthesis"/>
</dbReference>
<dbReference type="Reactome" id="R-DDI-2162123">
    <property type="pathway name" value="Synthesis of Prostaglandins (PG) and Thromboxanes (TX)"/>
</dbReference>
<dbReference type="Reactome" id="R-DDI-5365859">
    <property type="pathway name" value="RA biosynthesis pathway"/>
</dbReference>
<dbReference type="Reactome" id="R-DDI-5652227">
    <property type="pathway name" value="Fructose biosynthesis"/>
</dbReference>
<dbReference type="Reactome" id="R-DDI-5661270">
    <property type="pathway name" value="Formation of xylulose-5-phosphate"/>
</dbReference>
<dbReference type="Reactome" id="R-DDI-9757110">
    <property type="pathway name" value="Prednisone ADME"/>
</dbReference>
<dbReference type="PRO" id="PR:Q54NZ7"/>
<dbReference type="Proteomes" id="UP000002195">
    <property type="component" value="Chromosome 4"/>
</dbReference>
<dbReference type="GO" id="GO:0005829">
    <property type="term" value="C:cytosol"/>
    <property type="evidence" value="ECO:0000318"/>
    <property type="project" value="GO_Central"/>
</dbReference>
<dbReference type="GO" id="GO:0004032">
    <property type="term" value="F:aldose reductase (NADPH) activity"/>
    <property type="evidence" value="ECO:0000318"/>
    <property type="project" value="GO_Central"/>
</dbReference>
<dbReference type="CDD" id="cd19071">
    <property type="entry name" value="AKR_AKR1-5-like"/>
    <property type="match status" value="1"/>
</dbReference>
<dbReference type="FunFam" id="3.20.20.100:FF:000007">
    <property type="entry name" value="NAD(P)H-dependent D-xylose reductase xyl1"/>
    <property type="match status" value="1"/>
</dbReference>
<dbReference type="Gene3D" id="3.20.20.100">
    <property type="entry name" value="NADP-dependent oxidoreductase domain"/>
    <property type="match status" value="1"/>
</dbReference>
<dbReference type="InterPro" id="IPR020471">
    <property type="entry name" value="AKR"/>
</dbReference>
<dbReference type="InterPro" id="IPR018170">
    <property type="entry name" value="Aldo/ket_reductase_CS"/>
</dbReference>
<dbReference type="InterPro" id="IPR023210">
    <property type="entry name" value="NADP_OxRdtase_dom"/>
</dbReference>
<dbReference type="InterPro" id="IPR036812">
    <property type="entry name" value="NADP_OxRdtase_dom_sf"/>
</dbReference>
<dbReference type="PANTHER" id="PTHR11732">
    <property type="entry name" value="ALDO/KETO REDUCTASE"/>
    <property type="match status" value="1"/>
</dbReference>
<dbReference type="Pfam" id="PF00248">
    <property type="entry name" value="Aldo_ket_red"/>
    <property type="match status" value="1"/>
</dbReference>
<dbReference type="PIRSF" id="PIRSF000097">
    <property type="entry name" value="AKR"/>
    <property type="match status" value="1"/>
</dbReference>
<dbReference type="PRINTS" id="PR00069">
    <property type="entry name" value="ALDKETRDTASE"/>
</dbReference>
<dbReference type="SUPFAM" id="SSF51430">
    <property type="entry name" value="NAD(P)-linked oxidoreductase"/>
    <property type="match status" value="1"/>
</dbReference>
<dbReference type="PROSITE" id="PS00798">
    <property type="entry name" value="ALDOKETO_REDUCTASE_1"/>
    <property type="match status" value="1"/>
</dbReference>
<dbReference type="PROSITE" id="PS00062">
    <property type="entry name" value="ALDOKETO_REDUCTASE_2"/>
    <property type="match status" value="1"/>
</dbReference>
<dbReference type="PROSITE" id="PS00063">
    <property type="entry name" value="ALDOKETO_REDUCTASE_3"/>
    <property type="match status" value="1"/>
</dbReference>
<sequence>MSQPQNTFKLNDDIHHIPMIGLGTYNGAKVGEVGDAVKVALKSGYRHIDGAAIYMNEKEIGHALKEVFAEGEIKREDIFYVSKLWNSCHHASLVRKHCEKTLEDLGLEYLDLYLIHWPIAFENADPSGTTTQPLRDSDGEPVLAAVSIRETWQEMEKLVEYGLVKSIGVSNFNVQNLVDLLTYAKIKPAINQVEVHPYLSQPNLKYFCDRYGIVLTAYSPLGQGKCDLLSNETLKSIADKHNKTVANVIFKWLNQRGIVTIPKSSNPARIIENFNIFDFQLSNEDMDKINSLNSNLRTCTPANFCKIPLFD</sequence>
<evidence type="ECO:0000250" key="1"/>
<evidence type="ECO:0000255" key="2"/>
<evidence type="ECO:0000305" key="3"/>
<proteinExistence type="inferred from homology"/>